<feature type="chain" id="PRO_0000381091" description="8-amino-7-oxononanoate synthase">
    <location>
        <begin position="1"/>
        <end position="397"/>
    </location>
</feature>
<feature type="binding site" evidence="1">
    <location>
        <position position="21"/>
    </location>
    <ligand>
        <name>substrate</name>
    </ligand>
</feature>
<feature type="binding site" evidence="1">
    <location>
        <begin position="110"/>
        <end position="111"/>
    </location>
    <ligand>
        <name>pyridoxal 5'-phosphate</name>
        <dbReference type="ChEBI" id="CHEBI:597326"/>
    </ligand>
</feature>
<feature type="binding site" evidence="1">
    <location>
        <position position="135"/>
    </location>
    <ligand>
        <name>substrate</name>
    </ligand>
</feature>
<feature type="binding site" evidence="1">
    <location>
        <position position="181"/>
    </location>
    <ligand>
        <name>pyridoxal 5'-phosphate</name>
        <dbReference type="ChEBI" id="CHEBI:597326"/>
    </ligand>
</feature>
<feature type="binding site" evidence="1">
    <location>
        <position position="209"/>
    </location>
    <ligand>
        <name>pyridoxal 5'-phosphate</name>
        <dbReference type="ChEBI" id="CHEBI:597326"/>
    </ligand>
</feature>
<feature type="binding site" evidence="1">
    <location>
        <position position="238"/>
    </location>
    <ligand>
        <name>pyridoxal 5'-phosphate</name>
        <dbReference type="ChEBI" id="CHEBI:597326"/>
    </ligand>
</feature>
<feature type="binding site" evidence="1">
    <location>
        <position position="355"/>
    </location>
    <ligand>
        <name>substrate</name>
    </ligand>
</feature>
<feature type="modified residue" description="N6-(pyridoxal phosphate)lysine" evidence="1">
    <location>
        <position position="241"/>
    </location>
</feature>
<gene>
    <name evidence="1" type="primary">bioF</name>
    <name type="ordered locus">Sde_3138</name>
</gene>
<keyword id="KW-0093">Biotin biosynthesis</keyword>
<keyword id="KW-0663">Pyridoxal phosphate</keyword>
<keyword id="KW-1185">Reference proteome</keyword>
<keyword id="KW-0808">Transferase</keyword>
<proteinExistence type="inferred from homology"/>
<comment type="function">
    <text evidence="1">Catalyzes the decarboxylative condensation of pimeloyl-[acyl-carrier protein] and L-alanine to produce 8-amino-7-oxononanoate (AON), [acyl-carrier protein], and carbon dioxide.</text>
</comment>
<comment type="catalytic activity">
    <reaction evidence="1">
        <text>6-carboxyhexanoyl-[ACP] + L-alanine + H(+) = (8S)-8-amino-7-oxononanoate + holo-[ACP] + CO2</text>
        <dbReference type="Rhea" id="RHEA:42288"/>
        <dbReference type="Rhea" id="RHEA-COMP:9685"/>
        <dbReference type="Rhea" id="RHEA-COMP:9955"/>
        <dbReference type="ChEBI" id="CHEBI:15378"/>
        <dbReference type="ChEBI" id="CHEBI:16526"/>
        <dbReference type="ChEBI" id="CHEBI:57972"/>
        <dbReference type="ChEBI" id="CHEBI:64479"/>
        <dbReference type="ChEBI" id="CHEBI:78846"/>
        <dbReference type="ChEBI" id="CHEBI:149468"/>
        <dbReference type="EC" id="2.3.1.47"/>
    </reaction>
</comment>
<comment type="cofactor">
    <cofactor evidence="1">
        <name>pyridoxal 5'-phosphate</name>
        <dbReference type="ChEBI" id="CHEBI:597326"/>
    </cofactor>
</comment>
<comment type="pathway">
    <text evidence="1">Cofactor biosynthesis; biotin biosynthesis.</text>
</comment>
<comment type="subunit">
    <text evidence="1">Homodimer.</text>
</comment>
<comment type="similarity">
    <text evidence="1">Belongs to the class-II pyridoxal-phosphate-dependent aminotransferase family. BioF subfamily.</text>
</comment>
<protein>
    <recommendedName>
        <fullName evidence="1">8-amino-7-oxononanoate synthase</fullName>
        <shortName evidence="1">AONS</shortName>
        <ecNumber evidence="1">2.3.1.47</ecNumber>
    </recommendedName>
    <alternativeName>
        <fullName evidence="1">7-keto-8-amino-pelargonic acid synthase</fullName>
        <shortName evidence="1">7-KAP synthase</shortName>
        <shortName evidence="1">KAPA synthase</shortName>
    </alternativeName>
    <alternativeName>
        <fullName evidence="1">8-amino-7-ketopelargonate synthase</fullName>
    </alternativeName>
</protein>
<reference key="1">
    <citation type="journal article" date="2008" name="PLoS Genet.">
        <title>Complete genome sequence of the complex carbohydrate-degrading marine bacterium, Saccharophagus degradans strain 2-40 T.</title>
        <authorList>
            <person name="Weiner R.M."/>
            <person name="Taylor L.E. II"/>
            <person name="Henrissat B."/>
            <person name="Hauser L."/>
            <person name="Land M."/>
            <person name="Coutinho P.M."/>
            <person name="Rancurel C."/>
            <person name="Saunders E.H."/>
            <person name="Longmire A.G."/>
            <person name="Zhang H."/>
            <person name="Bayer E.A."/>
            <person name="Gilbert H.J."/>
            <person name="Larimer F."/>
            <person name="Zhulin I.B."/>
            <person name="Ekborg N.A."/>
            <person name="Lamed R."/>
            <person name="Richardson P.M."/>
            <person name="Borovok I."/>
            <person name="Hutcheson S."/>
        </authorList>
    </citation>
    <scope>NUCLEOTIDE SEQUENCE [LARGE SCALE GENOMIC DNA]</scope>
    <source>
        <strain>2-40 / ATCC 43961 / DSM 17024</strain>
    </source>
</reference>
<evidence type="ECO:0000255" key="1">
    <source>
        <dbReference type="HAMAP-Rule" id="MF_01693"/>
    </source>
</evidence>
<name>BIOF_SACD2</name>
<accession>Q21FY4</accession>
<dbReference type="EC" id="2.3.1.47" evidence="1"/>
<dbReference type="EMBL" id="CP000282">
    <property type="protein sequence ID" value="ABD82395.1"/>
    <property type="molecule type" value="Genomic_DNA"/>
</dbReference>
<dbReference type="RefSeq" id="WP_011469611.1">
    <property type="nucleotide sequence ID" value="NC_007912.1"/>
</dbReference>
<dbReference type="SMR" id="Q21FY4"/>
<dbReference type="STRING" id="203122.Sde_3138"/>
<dbReference type="GeneID" id="98614767"/>
<dbReference type="KEGG" id="sde:Sde_3138"/>
<dbReference type="eggNOG" id="COG0156">
    <property type="taxonomic scope" value="Bacteria"/>
</dbReference>
<dbReference type="HOGENOM" id="CLU_015846_11_2_6"/>
<dbReference type="OrthoDB" id="9807157at2"/>
<dbReference type="UniPathway" id="UPA00078"/>
<dbReference type="Proteomes" id="UP000001947">
    <property type="component" value="Chromosome"/>
</dbReference>
<dbReference type="GO" id="GO:0008710">
    <property type="term" value="F:8-amino-7-oxononanoate synthase activity"/>
    <property type="evidence" value="ECO:0007669"/>
    <property type="project" value="UniProtKB-UniRule"/>
</dbReference>
<dbReference type="GO" id="GO:0030170">
    <property type="term" value="F:pyridoxal phosphate binding"/>
    <property type="evidence" value="ECO:0007669"/>
    <property type="project" value="UniProtKB-UniRule"/>
</dbReference>
<dbReference type="GO" id="GO:0009102">
    <property type="term" value="P:biotin biosynthetic process"/>
    <property type="evidence" value="ECO:0007669"/>
    <property type="project" value="UniProtKB-UniRule"/>
</dbReference>
<dbReference type="CDD" id="cd06454">
    <property type="entry name" value="KBL_like"/>
    <property type="match status" value="1"/>
</dbReference>
<dbReference type="Gene3D" id="3.90.1150.10">
    <property type="entry name" value="Aspartate Aminotransferase, domain 1"/>
    <property type="match status" value="1"/>
</dbReference>
<dbReference type="Gene3D" id="3.40.640.10">
    <property type="entry name" value="Type I PLP-dependent aspartate aminotransferase-like (Major domain)"/>
    <property type="match status" value="1"/>
</dbReference>
<dbReference type="HAMAP" id="MF_01693">
    <property type="entry name" value="BioF_aminotrans_2"/>
    <property type="match status" value="1"/>
</dbReference>
<dbReference type="InterPro" id="IPR001917">
    <property type="entry name" value="Aminotrans_II_pyridoxalP_BS"/>
</dbReference>
<dbReference type="InterPro" id="IPR004839">
    <property type="entry name" value="Aminotransferase_I/II_large"/>
</dbReference>
<dbReference type="InterPro" id="IPR050087">
    <property type="entry name" value="AON_synthase_class-II"/>
</dbReference>
<dbReference type="InterPro" id="IPR004723">
    <property type="entry name" value="AONS_Archaea/Proteobacteria"/>
</dbReference>
<dbReference type="InterPro" id="IPR022834">
    <property type="entry name" value="AONS_Proteobacteria"/>
</dbReference>
<dbReference type="InterPro" id="IPR015424">
    <property type="entry name" value="PyrdxlP-dep_Trfase"/>
</dbReference>
<dbReference type="InterPro" id="IPR015421">
    <property type="entry name" value="PyrdxlP-dep_Trfase_major"/>
</dbReference>
<dbReference type="InterPro" id="IPR015422">
    <property type="entry name" value="PyrdxlP-dep_Trfase_small"/>
</dbReference>
<dbReference type="NCBIfam" id="TIGR00858">
    <property type="entry name" value="bioF"/>
    <property type="match status" value="1"/>
</dbReference>
<dbReference type="PANTHER" id="PTHR13693:SF100">
    <property type="entry name" value="8-AMINO-7-OXONONANOATE SYNTHASE"/>
    <property type="match status" value="1"/>
</dbReference>
<dbReference type="PANTHER" id="PTHR13693">
    <property type="entry name" value="CLASS II AMINOTRANSFERASE/8-AMINO-7-OXONONANOATE SYNTHASE"/>
    <property type="match status" value="1"/>
</dbReference>
<dbReference type="Pfam" id="PF00155">
    <property type="entry name" value="Aminotran_1_2"/>
    <property type="match status" value="1"/>
</dbReference>
<dbReference type="SUPFAM" id="SSF53383">
    <property type="entry name" value="PLP-dependent transferases"/>
    <property type="match status" value="1"/>
</dbReference>
<dbReference type="PROSITE" id="PS00599">
    <property type="entry name" value="AA_TRANSFER_CLASS_2"/>
    <property type="match status" value="1"/>
</dbReference>
<organism>
    <name type="scientific">Saccharophagus degradans (strain 2-40 / ATCC 43961 / DSM 17024)</name>
    <dbReference type="NCBI Taxonomy" id="203122"/>
    <lineage>
        <taxon>Bacteria</taxon>
        <taxon>Pseudomonadati</taxon>
        <taxon>Pseudomonadota</taxon>
        <taxon>Gammaproteobacteria</taxon>
        <taxon>Cellvibrionales</taxon>
        <taxon>Cellvibrionaceae</taxon>
        <taxon>Saccharophagus</taxon>
    </lineage>
</organism>
<sequence>MSLESELQKELSSRKAINRYRSRRVALSPSGVRMRVEGETKELIAFCSNDYLGLAQHPKVIEAFTQAARHYGVGSGASHLVNGHSQEHHQLEEELAAFTGRPRALLFSTGYMANMGVINGLLGRGDAVFQDKLNHASLLDGGLISGAKFHRFRHNDCEHLNTQLEKSTAARKLIVVDGVFSMDGDAANLNQLAASAKKHNAWLMVDDAHGFGCMGENGKGVVDACGLTLDDVPILMGTLGKAFGTFGAFVAGSETLIEALIQLARTYVYTTALPPAVAAATRASLHLLETEHWRREKLNALIQQFRGGCEALNLQLMPSQSPIQPIVLGEDAVALNVSKKMAERGFWITAIRPPTVPEGTARLRITLSAEHSEQDVEQLLNALAEVMREVSGELQSE</sequence>